<evidence type="ECO:0000255" key="1">
    <source>
        <dbReference type="HAMAP-Rule" id="MF_00658"/>
    </source>
</evidence>
<protein>
    <recommendedName>
        <fullName evidence="1">Ribosomal RNA large subunit methyltransferase H</fullName>
        <ecNumber evidence="1">2.1.1.177</ecNumber>
    </recommendedName>
    <alternativeName>
        <fullName evidence="1">23S rRNA (pseudouridine1915-N3)-methyltransferase</fullName>
    </alternativeName>
    <alternativeName>
        <fullName evidence="1">23S rRNA m3Psi1915 methyltransferase</fullName>
    </alternativeName>
    <alternativeName>
        <fullName evidence="1">rRNA (pseudouridine-N3-)-methyltransferase RlmH</fullName>
    </alternativeName>
</protein>
<organism>
    <name type="scientific">Staphylococcus aureus (strain JH9)</name>
    <dbReference type="NCBI Taxonomy" id="359786"/>
    <lineage>
        <taxon>Bacteria</taxon>
        <taxon>Bacillati</taxon>
        <taxon>Bacillota</taxon>
        <taxon>Bacilli</taxon>
        <taxon>Bacillales</taxon>
        <taxon>Staphylococcaceae</taxon>
        <taxon>Staphylococcus</taxon>
    </lineage>
</organism>
<gene>
    <name evidence="1" type="primary">rlmH</name>
    <name type="ordered locus">SaurJH9_0024</name>
</gene>
<dbReference type="EC" id="2.1.1.177" evidence="1"/>
<dbReference type="EMBL" id="CP000703">
    <property type="protein sequence ID" value="ABQ47838.1"/>
    <property type="molecule type" value="Genomic_DNA"/>
</dbReference>
<dbReference type="RefSeq" id="WP_000704775.1">
    <property type="nucleotide sequence ID" value="NC_009487.1"/>
</dbReference>
<dbReference type="SMR" id="A5INR5"/>
<dbReference type="GeneID" id="98344407"/>
<dbReference type="KEGG" id="saj:SaurJH9_0024"/>
<dbReference type="HOGENOM" id="CLU_100552_0_0_9"/>
<dbReference type="GO" id="GO:0005737">
    <property type="term" value="C:cytoplasm"/>
    <property type="evidence" value="ECO:0007669"/>
    <property type="project" value="UniProtKB-SubCell"/>
</dbReference>
<dbReference type="GO" id="GO:0070038">
    <property type="term" value="F:rRNA (pseudouridine-N3-)-methyltransferase activity"/>
    <property type="evidence" value="ECO:0007669"/>
    <property type="project" value="UniProtKB-UniRule"/>
</dbReference>
<dbReference type="CDD" id="cd18081">
    <property type="entry name" value="RlmH-like"/>
    <property type="match status" value="1"/>
</dbReference>
<dbReference type="Gene3D" id="3.40.1280.10">
    <property type="match status" value="1"/>
</dbReference>
<dbReference type="HAMAP" id="MF_00658">
    <property type="entry name" value="23SrRNA_methyltr_H"/>
    <property type="match status" value="1"/>
</dbReference>
<dbReference type="InterPro" id="IPR029028">
    <property type="entry name" value="Alpha/beta_knot_MTases"/>
</dbReference>
<dbReference type="InterPro" id="IPR003742">
    <property type="entry name" value="RlmH-like"/>
</dbReference>
<dbReference type="InterPro" id="IPR029026">
    <property type="entry name" value="tRNA_m1G_MTases_N"/>
</dbReference>
<dbReference type="NCBIfam" id="NF000985">
    <property type="entry name" value="PRK00103.1-3"/>
    <property type="match status" value="1"/>
</dbReference>
<dbReference type="NCBIfam" id="NF000986">
    <property type="entry name" value="PRK00103.1-4"/>
    <property type="match status" value="1"/>
</dbReference>
<dbReference type="NCBIfam" id="TIGR00246">
    <property type="entry name" value="tRNA_RlmH_YbeA"/>
    <property type="match status" value="1"/>
</dbReference>
<dbReference type="PANTHER" id="PTHR33603">
    <property type="entry name" value="METHYLTRANSFERASE"/>
    <property type="match status" value="1"/>
</dbReference>
<dbReference type="PANTHER" id="PTHR33603:SF1">
    <property type="entry name" value="RIBOSOMAL RNA LARGE SUBUNIT METHYLTRANSFERASE H"/>
    <property type="match status" value="1"/>
</dbReference>
<dbReference type="Pfam" id="PF02590">
    <property type="entry name" value="SPOUT_MTase"/>
    <property type="match status" value="1"/>
</dbReference>
<dbReference type="PIRSF" id="PIRSF004505">
    <property type="entry name" value="MT_bac"/>
    <property type="match status" value="1"/>
</dbReference>
<dbReference type="SUPFAM" id="SSF75217">
    <property type="entry name" value="alpha/beta knot"/>
    <property type="match status" value="1"/>
</dbReference>
<sequence>MKITILAVGKLKEKYWKQAIAEYEKRLGPYTKIDIIEVPDEKAPENMSDKEIEQVKEKEGQRILAKIKPQSTVITLEIQGKMLSSEGLAQELNQRMTQGQSDFVFVIGGSNGLHKDVLQRSNYALSFSKMTFPHQMMRVVLIEQVYRAFKIMRGEAYHK</sequence>
<feature type="chain" id="PRO_1000082819" description="Ribosomal RNA large subunit methyltransferase H">
    <location>
        <begin position="1"/>
        <end position="159"/>
    </location>
</feature>
<feature type="binding site" evidence="1">
    <location>
        <position position="76"/>
    </location>
    <ligand>
        <name>S-adenosyl-L-methionine</name>
        <dbReference type="ChEBI" id="CHEBI:59789"/>
    </ligand>
</feature>
<feature type="binding site" evidence="1">
    <location>
        <position position="108"/>
    </location>
    <ligand>
        <name>S-adenosyl-L-methionine</name>
        <dbReference type="ChEBI" id="CHEBI:59789"/>
    </ligand>
</feature>
<feature type="binding site" evidence="1">
    <location>
        <begin position="127"/>
        <end position="132"/>
    </location>
    <ligand>
        <name>S-adenosyl-L-methionine</name>
        <dbReference type="ChEBI" id="CHEBI:59789"/>
    </ligand>
</feature>
<name>RLMH_STAA9</name>
<reference key="1">
    <citation type="submission" date="2007-05" db="EMBL/GenBank/DDBJ databases">
        <title>Complete sequence of chromosome of Staphylococcus aureus subsp. aureus JH9.</title>
        <authorList>
            <consortium name="US DOE Joint Genome Institute"/>
            <person name="Copeland A."/>
            <person name="Lucas S."/>
            <person name="Lapidus A."/>
            <person name="Barry K."/>
            <person name="Detter J.C."/>
            <person name="Glavina del Rio T."/>
            <person name="Hammon N."/>
            <person name="Israni S."/>
            <person name="Pitluck S."/>
            <person name="Chain P."/>
            <person name="Malfatti S."/>
            <person name="Shin M."/>
            <person name="Vergez L."/>
            <person name="Schmutz J."/>
            <person name="Larimer F."/>
            <person name="Land M."/>
            <person name="Hauser L."/>
            <person name="Kyrpides N."/>
            <person name="Kim E."/>
            <person name="Tomasz A."/>
            <person name="Richardson P."/>
        </authorList>
    </citation>
    <scope>NUCLEOTIDE SEQUENCE [LARGE SCALE GENOMIC DNA]</scope>
    <source>
        <strain>JH9</strain>
    </source>
</reference>
<accession>A5INR5</accession>
<proteinExistence type="inferred from homology"/>
<comment type="function">
    <text evidence="1">Specifically methylates the pseudouridine at position 1915 (m3Psi1915) in 23S rRNA.</text>
</comment>
<comment type="catalytic activity">
    <reaction evidence="1">
        <text>pseudouridine(1915) in 23S rRNA + S-adenosyl-L-methionine = N(3)-methylpseudouridine(1915) in 23S rRNA + S-adenosyl-L-homocysteine + H(+)</text>
        <dbReference type="Rhea" id="RHEA:42752"/>
        <dbReference type="Rhea" id="RHEA-COMP:10221"/>
        <dbReference type="Rhea" id="RHEA-COMP:10222"/>
        <dbReference type="ChEBI" id="CHEBI:15378"/>
        <dbReference type="ChEBI" id="CHEBI:57856"/>
        <dbReference type="ChEBI" id="CHEBI:59789"/>
        <dbReference type="ChEBI" id="CHEBI:65314"/>
        <dbReference type="ChEBI" id="CHEBI:74486"/>
        <dbReference type="EC" id="2.1.1.177"/>
    </reaction>
</comment>
<comment type="subunit">
    <text evidence="1">Homodimer.</text>
</comment>
<comment type="subcellular location">
    <subcellularLocation>
        <location evidence="1">Cytoplasm</location>
    </subcellularLocation>
</comment>
<comment type="similarity">
    <text evidence="1">Belongs to the RNA methyltransferase RlmH family.</text>
</comment>
<keyword id="KW-0963">Cytoplasm</keyword>
<keyword id="KW-0489">Methyltransferase</keyword>
<keyword id="KW-0698">rRNA processing</keyword>
<keyword id="KW-0949">S-adenosyl-L-methionine</keyword>
<keyword id="KW-0808">Transferase</keyword>